<gene>
    <name type="primary">C11orf40</name>
    <name type="synonym">NOV1</name>
</gene>
<accession>Q8WZ69</accession>
<proteinExistence type="evidence at transcript level"/>
<dbReference type="EMBL" id="AF439154">
    <property type="protein sequence ID" value="AAL31642.1"/>
    <property type="molecule type" value="mRNA"/>
</dbReference>
<dbReference type="RefSeq" id="NP_653264.1">
    <property type="nucleotide sequence ID" value="NM_144663.1"/>
</dbReference>
<dbReference type="iPTMnet" id="Q8WZ69"/>
<dbReference type="PhosphoSitePlus" id="Q8WZ69"/>
<dbReference type="BioMuta" id="C11orf40"/>
<dbReference type="jPOST" id="Q8WZ69"/>
<dbReference type="PaxDb" id="9606-ENSP00000302918"/>
<dbReference type="DNASU" id="143501"/>
<dbReference type="UCSC" id="uc010qyg.2">
    <property type="organism name" value="human"/>
</dbReference>
<dbReference type="AGR" id="HGNC:23986"/>
<dbReference type="GeneCards" id="C11orf40"/>
<dbReference type="HGNC" id="HGNC:23986">
    <property type="gene designation" value="C11orf40"/>
</dbReference>
<dbReference type="neXtProt" id="NX_Q8WZ69"/>
<dbReference type="PharmGKB" id="PA142672300"/>
<dbReference type="eggNOG" id="ENOG502TFPF">
    <property type="taxonomic scope" value="Eukaryota"/>
</dbReference>
<dbReference type="HOGENOM" id="CLU_111184_0_0_1"/>
<dbReference type="InParanoid" id="Q8WZ69"/>
<dbReference type="PAN-GO" id="Q8WZ69">
    <property type="GO annotations" value="0 GO annotations based on evolutionary models"/>
</dbReference>
<dbReference type="PhylomeDB" id="Q8WZ69"/>
<dbReference type="PathwayCommons" id="Q8WZ69"/>
<dbReference type="SignaLink" id="Q8WZ69"/>
<dbReference type="BioGRID-ORCS" id="143501">
    <property type="hits" value="11 hits in 1104 CRISPR screens"/>
</dbReference>
<dbReference type="ChiTaRS" id="C11orf40">
    <property type="organism name" value="human"/>
</dbReference>
<dbReference type="GenomeRNAi" id="143501"/>
<dbReference type="Pharos" id="Q8WZ69">
    <property type="development level" value="Tdark"/>
</dbReference>
<dbReference type="PRO" id="PR:Q8WZ69"/>
<dbReference type="Proteomes" id="UP000005640">
    <property type="component" value="Unplaced"/>
</dbReference>
<dbReference type="RNAct" id="Q8WZ69">
    <property type="molecule type" value="protein"/>
</dbReference>
<dbReference type="InterPro" id="IPR041435">
    <property type="entry name" value="DUF5552"/>
</dbReference>
<dbReference type="Pfam" id="PF17706">
    <property type="entry name" value="DUF5552"/>
    <property type="match status" value="1"/>
</dbReference>
<feature type="chain" id="PRO_0000263089" description="Putative uncharacterized protein C11orf40">
    <location>
        <begin position="1"/>
        <end position="217"/>
    </location>
</feature>
<feature type="sequence variant" id="VAR_029581" description="In dbSNP:rs12795289.">
    <original>F</original>
    <variation>S</variation>
    <location>
        <position position="100"/>
    </location>
</feature>
<sequence>MALVQALVPREREPKLSILQMDRGDPQHSSHWCPEREKVKLLTLKPRETSKNILINFYRAFNLDKDVFIHQANHPLTVPSSVVMGDNGHTLAEDDKRPCFRVLPCYLERVSSGISISWISAPLPVGAMKHQLLCDLMDLITLSFWLAGQCMSLKATNMQHCKCSIATSDWAIELDRTDYKTLPSEYSILALLQVFAGKNCMDRVLLHVDVNYLKSLP</sequence>
<reference key="1">
    <citation type="submission" date="2001-10" db="EMBL/GenBank/DDBJ databases">
        <title>Cloning and characterization of FLJ10369, a novel Ro/SSA1-related gene on human chromosome 11p15.5.</title>
        <authorList>
            <person name="Rhodes D.A."/>
            <person name="Allcock R.J.N."/>
            <person name="Trowsdale J."/>
        </authorList>
    </citation>
    <scope>NUCLEOTIDE SEQUENCE [MRNA]</scope>
</reference>
<organism>
    <name type="scientific">Homo sapiens</name>
    <name type="common">Human</name>
    <dbReference type="NCBI Taxonomy" id="9606"/>
    <lineage>
        <taxon>Eukaryota</taxon>
        <taxon>Metazoa</taxon>
        <taxon>Chordata</taxon>
        <taxon>Craniata</taxon>
        <taxon>Vertebrata</taxon>
        <taxon>Euteleostomi</taxon>
        <taxon>Mammalia</taxon>
        <taxon>Eutheria</taxon>
        <taxon>Euarchontoglires</taxon>
        <taxon>Primates</taxon>
        <taxon>Haplorrhini</taxon>
        <taxon>Catarrhini</taxon>
        <taxon>Hominidae</taxon>
        <taxon>Homo</taxon>
    </lineage>
</organism>
<name>CK040_HUMAN</name>
<protein>
    <recommendedName>
        <fullName>Putative uncharacterized protein C11orf40</fullName>
    </recommendedName>
    <alternativeName>
        <fullName>Ro/SSA1-related protein</fullName>
    </alternativeName>
</protein>
<keyword id="KW-1185">Reference proteome</keyword>